<protein>
    <recommendedName>
        <fullName>DNA damage-inducible transcript 3 protein</fullName>
        <shortName>DDIT-3</shortName>
    </recommendedName>
    <alternativeName>
        <fullName>C/EBP zeta</fullName>
    </alternativeName>
    <alternativeName>
        <fullName>C/EBP-homologous protein</fullName>
        <shortName>CHOP</shortName>
    </alternativeName>
    <alternativeName>
        <fullName>C/EBP-homologous protein 10</fullName>
        <shortName>CHOP-10</shortName>
    </alternativeName>
    <alternativeName>
        <fullName>CCAAT/enhancer-binding protein homologous protein</fullName>
    </alternativeName>
    <alternativeName>
        <fullName>Growth arrest and DNA damage-inducible protein GADD153</fullName>
    </alternativeName>
</protein>
<keyword id="KW-0010">Activator</keyword>
<keyword id="KW-0024">Alternative initiation</keyword>
<keyword id="KW-0025">Alternative splicing</keyword>
<keyword id="KW-0053">Apoptosis</keyword>
<keyword id="KW-0131">Cell cycle</keyword>
<keyword id="KW-0160">Chromosomal rearrangement</keyword>
<keyword id="KW-0963">Cytoplasm</keyword>
<keyword id="KW-0238">DNA-binding</keyword>
<keyword id="KW-0338">Growth arrest</keyword>
<keyword id="KW-0539">Nucleus</keyword>
<keyword id="KW-0597">Phosphoprotein</keyword>
<keyword id="KW-0656">Proto-oncogene</keyword>
<keyword id="KW-1185">Reference proteome</keyword>
<keyword id="KW-0678">Repressor</keyword>
<keyword id="KW-0346">Stress response</keyword>
<keyword id="KW-0804">Transcription</keyword>
<keyword id="KW-0805">Transcription regulation</keyword>
<keyword id="KW-0832">Ubl conjugation</keyword>
<keyword id="KW-0834">Unfolded protein response</keyword>
<keyword id="KW-0879">Wnt signaling pathway</keyword>
<organism>
    <name type="scientific">Homo sapiens</name>
    <name type="common">Human</name>
    <dbReference type="NCBI Taxonomy" id="9606"/>
    <lineage>
        <taxon>Eukaryota</taxon>
        <taxon>Metazoa</taxon>
        <taxon>Chordata</taxon>
        <taxon>Craniata</taxon>
        <taxon>Vertebrata</taxon>
        <taxon>Euteleostomi</taxon>
        <taxon>Mammalia</taxon>
        <taxon>Eutheria</taxon>
        <taxon>Euarchontoglires</taxon>
        <taxon>Primates</taxon>
        <taxon>Haplorrhini</taxon>
        <taxon>Catarrhini</taxon>
        <taxon>Hominidae</taxon>
        <taxon>Homo</taxon>
    </lineage>
</organism>
<comment type="function">
    <text evidence="2 5 6 7 9 11 12 14 15 16">Multifunctional transcription factor in endoplasmic reticulum (ER) stress response (PubMed:15322075, PubMed:15775988, PubMed:19672300). Plays an essential role in the response to a wide variety of cell stresses and induces cell cycle arrest and apoptosis in response to ER stress (PubMed:15322075, PubMed:15775988). Plays a dual role both as an inhibitor of CCAAT/enhancer-binding protein (C/EBP) function and as an activator of other genes (By similarity). Acts as a dominant-negative regulator of C/EBP-induced transcription: dimerizes with members of the C/EBP family, impairs their association with C/EBP binding sites in the promoter regions, and inhibits the expression of C/EBP regulated genes (By similarity). Positively regulates the transcription of TRIB3, IL6, IL8, IL23, TNFRSF10B/DR5, PPP1R15A/GADD34, BBC3/PUMA, BCL2L11/BIM and ERO1L (PubMed:15775988, PubMed:17709599, PubMed:20876114, PubMed:22761832). Negatively regulates; expression of BCL2 and MYOD1, ATF4-dependent transcriptional activation of asparagine synthetase (ASNS), CEBPA-dependent transcriptional activation of hepcidin (HAMP) and CEBPB-mediated expression of peroxisome proliferator-activated receptor gamma (PPARG) (PubMed:18940792, PubMed:19672300, PubMed:20829347). Together with ATF4, mediates ER-mediated cell death by promoting expression of genes involved in cellular amino acid metabolic processes, mRNA translation and the unfolded protein response (UPR) in response to ER stress (By similarity). Inhibits the canonical Wnt signaling pathway by binding to TCF7L2/TCF4, impairing its DNA-binding properties and repressing its transcriptional activity (PubMed:16434966). Plays a regulatory role in the inflammatory response through the induction of caspase-11 (CASP4/CASP11) which induces the activation of caspase-1 (CASP1) and both these caspases increase the activation of pro-IL1B to mature IL1B which is involved in the inflammatory response (By similarity). Acts as a major regulator of postnatal neovascularization through regulation of endothelial nitric oxide synthase (NOS3)-related signaling (By similarity).</text>
</comment>
<comment type="subunit">
    <text evidence="6 7 10 11 14 16 17">Heterodimer (PubMed:29083303). Interacts with TCF7L2/TCF4, EP300/P300, HDAC1, HDAC5 and HDAC6 (PubMed:16434966, PubMed:17872950). Interacts with TRIB3 which blocks its association with EP300/P300 (PubMed:15775988, PubMed:17872950). Interacts with FOXO3, CEBPB and ATF4 (PubMed:18940792, PubMed:20829347, PubMed:22761832).</text>
</comment>
<comment type="subunit">
    <molecule>Isoform 1</molecule>
    <text evidence="17">Interacts with isoform AltDDIT3 of DDIT3.</text>
</comment>
<comment type="interaction">
    <interactant intactId="EBI-742651">
        <id>P35638</id>
    </interactant>
    <interactant intactId="EBI-1170906">
        <id>P15336</id>
        <label>ATF2</label>
    </interactant>
    <organismsDiffer>false</organismsDiffer>
    <experiments>2</experiments>
</comment>
<comment type="interaction">
    <interactant intactId="EBI-742651">
        <id>P35638</id>
    </interactant>
    <interactant intactId="EBI-712767">
        <id>P18847</id>
        <label>ATF3</label>
    </interactant>
    <organismsDiffer>false</organismsDiffer>
    <experiments>38</experiments>
</comment>
<comment type="interaction">
    <interactant intactId="EBI-742651">
        <id>P35638</id>
    </interactant>
    <interactant intactId="EBI-492498">
        <id>P18848</id>
        <label>ATF4</label>
    </interactant>
    <organismsDiffer>false</organismsDiffer>
    <experiments>5</experiments>
</comment>
<comment type="interaction">
    <interactant intactId="EBI-742651">
        <id>P35638</id>
    </interactant>
    <interactant intactId="EBI-765623">
        <id>P17544</id>
        <label>ATF7</label>
    </interactant>
    <organismsDiffer>false</organismsDiffer>
    <experiments>2</experiments>
</comment>
<comment type="interaction">
    <interactant intactId="EBI-742651">
        <id>P35638</id>
    </interactant>
    <interactant intactId="EBI-1263541">
        <id>O14867</id>
        <label>BACH1</label>
    </interactant>
    <organismsDiffer>false</organismsDiffer>
    <experiments>2</experiments>
</comment>
<comment type="interaction">
    <interactant intactId="EBI-742651">
        <id>P35638</id>
    </interactant>
    <interactant intactId="EBI-749503">
        <id>Q16520</id>
        <label>BATF</label>
    </interactant>
    <organismsDiffer>false</organismsDiffer>
    <experiments>8</experiments>
</comment>
<comment type="interaction">
    <interactant intactId="EBI-742651">
        <id>P35638</id>
    </interactant>
    <interactant intactId="EBI-742695">
        <id>Q8N1L9</id>
        <label>BATF2</label>
    </interactant>
    <organismsDiffer>false</organismsDiffer>
    <experiments>2</experiments>
</comment>
<comment type="interaction">
    <interactant intactId="EBI-742651">
        <id>P35638</id>
    </interactant>
    <interactant intactId="EBI-10312707">
        <id>Q9NR55</id>
        <label>BATF3</label>
    </interactant>
    <organismsDiffer>false</organismsDiffer>
    <experiments>8</experiments>
</comment>
<comment type="interaction">
    <interactant intactId="EBI-742651">
        <id>P35638</id>
    </interactant>
    <interactant intactId="EBI-1172054">
        <id>P49715</id>
        <label>CEBPA</label>
    </interactant>
    <organismsDiffer>false</organismsDiffer>
    <experiments>5</experiments>
</comment>
<comment type="interaction">
    <interactant intactId="EBI-742651">
        <id>P35638</id>
    </interactant>
    <interactant intactId="EBI-969696">
        <id>P17676</id>
        <label>CEBPB</label>
    </interactant>
    <organismsDiffer>false</organismsDiffer>
    <experiments>3</experiments>
</comment>
<comment type="interaction">
    <interactant intactId="EBI-742651">
        <id>P35638</id>
    </interactant>
    <interactant intactId="EBI-7962058">
        <id>P49716</id>
        <label>CEBPD</label>
    </interactant>
    <organismsDiffer>false</organismsDiffer>
    <experiments>2</experiments>
</comment>
<comment type="interaction">
    <interactant intactId="EBI-742651">
        <id>P35638</id>
    </interactant>
    <interactant intactId="EBI-3907048">
        <id>Q15744</id>
        <label>CEBPE</label>
    </interactant>
    <organismsDiffer>false</organismsDiffer>
    <experiments>3</experiments>
</comment>
<comment type="interaction">
    <interactant intactId="EBI-742651">
        <id>P35638</id>
    </interactant>
    <interactant intactId="EBI-740209">
        <id>P53567</id>
        <label>CEBPG</label>
    </interactant>
    <organismsDiffer>false</organismsDiffer>
    <experiments>7</experiments>
</comment>
<comment type="interaction">
    <interactant intactId="EBI-742651">
        <id>P35638</id>
    </interactant>
    <interactant intactId="EBI-739773">
        <id>Q9BSW2</id>
        <label>CRACR2A</label>
    </interactant>
    <organismsDiffer>false</organismsDiffer>
    <experiments>3</experiments>
</comment>
<comment type="interaction">
    <interactant intactId="EBI-742651">
        <id>P35638</id>
    </interactant>
    <interactant intactId="EBI-625002">
        <id>O43889</id>
        <label>CREB3</label>
    </interactant>
    <organismsDiffer>false</organismsDiffer>
    <experiments>2</experiments>
</comment>
<comment type="interaction">
    <interactant intactId="EBI-742651">
        <id>P35638</id>
    </interactant>
    <interactant intactId="EBI-2872455">
        <id>O60519</id>
        <label>CREBL2</label>
    </interactant>
    <organismsDiffer>false</organismsDiffer>
    <experiments>3</experiments>
</comment>
<comment type="interaction">
    <interactant intactId="EBI-742651">
        <id>P35638</id>
    </interactant>
    <interactant intactId="EBI-3908088">
        <id>Q10586</id>
        <label>DBP</label>
    </interactant>
    <organismsDiffer>false</organismsDiffer>
    <experiments>4</experiments>
</comment>
<comment type="interaction">
    <interactant intactId="EBI-742651">
        <id>P35638</id>
    </interactant>
    <interactant intactId="EBI-742651">
        <id>P35638</id>
        <label>DDIT3</label>
    </interactant>
    <organismsDiffer>false</organismsDiffer>
    <experiments>2</experiments>
</comment>
<comment type="interaction">
    <interactant intactId="EBI-742651">
        <id>P35638</id>
    </interactant>
    <interactant intactId="EBI-11989522">
        <id>Q7Z589-5</id>
        <label>EMSY</label>
    </interactant>
    <organismsDiffer>false</organismsDiffer>
    <experiments>3</experiments>
</comment>
<comment type="interaction">
    <interactant intactId="EBI-742651">
        <id>P35638</id>
    </interactant>
    <interactant intactId="EBI-852851">
        <id>P01100</id>
        <label>FOS</label>
    </interactant>
    <organismsDiffer>false</organismsDiffer>
    <experiments>11</experiments>
</comment>
<comment type="interaction">
    <interactant intactId="EBI-742651">
        <id>P35638</id>
    </interactant>
    <interactant intactId="EBI-3893419">
        <id>P15408</id>
        <label>FOSL2</label>
    </interactant>
    <organismsDiffer>false</organismsDiffer>
    <experiments>6</experiments>
</comment>
<comment type="interaction">
    <interactant intactId="EBI-742651">
        <id>P35638</id>
    </interactant>
    <interactant intactId="EBI-1047359">
        <id>Q13283</id>
        <label>G3BP1</label>
    </interactant>
    <organismsDiffer>false</organismsDiffer>
    <experiments>2</experiments>
</comment>
<comment type="interaction">
    <interactant intactId="EBI-742651">
        <id>P35638</id>
    </interactant>
    <interactant intactId="EBI-744302">
        <id>P14136</id>
        <label>GFAP</label>
    </interactant>
    <organismsDiffer>false</organismsDiffer>
    <experiments>3</experiments>
</comment>
<comment type="interaction">
    <interactant intactId="EBI-742651">
        <id>P35638</id>
    </interactant>
    <interactant intactId="EBI-2798854">
        <id>Q16534</id>
        <label>HLF</label>
    </interactant>
    <organismsDiffer>false</organismsDiffer>
    <experiments>3</experiments>
</comment>
<comment type="interaction">
    <interactant intactId="EBI-742651">
        <id>P35638</id>
    </interactant>
    <interactant intactId="EBI-742664">
        <id>Q9BPX1</id>
        <label>HSD17B14</label>
    </interactant>
    <organismsDiffer>false</organismsDiffer>
    <experiments>6</experiments>
</comment>
<comment type="interaction">
    <interactant intactId="EBI-742651">
        <id>P35638</id>
    </interactant>
    <interactant intactId="EBI-1248415">
        <id>Q8WYK2</id>
        <label>JDP2</label>
    </interactant>
    <organismsDiffer>false</organismsDiffer>
    <experiments>3</experiments>
</comment>
<comment type="interaction">
    <interactant intactId="EBI-742651">
        <id>P35638</id>
    </interactant>
    <interactant intactId="EBI-1055254">
        <id>Q8WXH2</id>
        <label>JPH3</label>
    </interactant>
    <organismsDiffer>false</organismsDiffer>
    <experiments>3</experiments>
</comment>
<comment type="interaction">
    <interactant intactId="EBI-742651">
        <id>P35638</id>
    </interactant>
    <interactant intactId="EBI-748062">
        <id>P17275</id>
        <label>JUNB</label>
    </interactant>
    <organismsDiffer>false</organismsDiffer>
    <experiments>2</experiments>
</comment>
<comment type="interaction">
    <interactant intactId="EBI-742651">
        <id>P35638</id>
    </interactant>
    <interactant intactId="EBI-739832">
        <id>Q8TBB1</id>
        <label>LNX1</label>
    </interactant>
    <organismsDiffer>false</organismsDiffer>
    <experiments>3</experiments>
</comment>
<comment type="interaction">
    <interactant intactId="EBI-742651">
        <id>P35638</id>
    </interactant>
    <interactant intactId="EBI-9384556">
        <id>Q9BTE3-2</id>
        <label>MCMBP</label>
    </interactant>
    <organismsDiffer>false</organismsDiffer>
    <experiments>3</experiments>
</comment>
<comment type="interaction">
    <interactant intactId="EBI-742651">
        <id>P35638</id>
    </interactant>
    <interactant intactId="EBI-2007911">
        <id>Q16236</id>
        <label>NFE2L2</label>
    </interactant>
    <organismsDiffer>false</organismsDiffer>
    <experiments>5</experiments>
</comment>
<comment type="interaction">
    <interactant intactId="EBI-742651">
        <id>P35638</id>
    </interactant>
    <interactant intactId="EBI-3951858">
        <id>Q16649</id>
        <label>NFIL3</label>
    </interactant>
    <organismsDiffer>false</organismsDiffer>
    <experiments>2</experiments>
</comment>
<comment type="interaction">
    <interactant intactId="EBI-742651">
        <id>P35638</id>
    </interactant>
    <interactant intactId="EBI-3247115">
        <id>Q86SX3</id>
        <label>TEDC1</label>
    </interactant>
    <organismsDiffer>false</organismsDiffer>
    <experiments>3</experiments>
</comment>
<comment type="interaction">
    <interactant intactId="EBI-742651">
        <id>P35638</id>
    </interactant>
    <interactant intactId="EBI-6932080">
        <id>O43508</id>
        <label>TNFSF12</label>
    </interactant>
    <organismsDiffer>false</organismsDiffer>
    <experiments>3</experiments>
</comment>
<comment type="interaction">
    <interactant intactId="EBI-742651">
        <id>P35638</id>
    </interactant>
    <interactant intactId="EBI-2932492">
        <id>Q99757</id>
        <label>TXN2</label>
    </interactant>
    <organismsDiffer>false</organismsDiffer>
    <experiments>3</experiments>
</comment>
<comment type="interaction">
    <interactant intactId="EBI-742651">
        <id>P35638</id>
    </interactant>
    <interactant intactId="EBI-1220595">
        <id>Q86VQ3</id>
        <label>TXNDC2</label>
    </interactant>
    <organismsDiffer>false</organismsDiffer>
    <experiments>3</experiments>
</comment>
<comment type="interaction">
    <interactant intactId="EBI-742651">
        <id>P35638</id>
    </interactant>
    <interactant intactId="EBI-2559305">
        <id>A5D8V6</id>
        <label>VPS37C</label>
    </interactant>
    <organismsDiffer>false</organismsDiffer>
    <experiments>3</experiments>
</comment>
<comment type="interaction">
    <interactant intactId="EBI-10173632">
        <id>P35638-2</id>
    </interactant>
    <interactant intactId="EBI-10187270">
        <id>Q9Y2J4-4</id>
        <label>AMOTL2</label>
    </interactant>
    <organismsDiffer>false</organismsDiffer>
    <experiments>3</experiments>
</comment>
<comment type="interaction">
    <interactant intactId="EBI-10173632">
        <id>P35638-2</id>
    </interactant>
    <interactant intactId="EBI-1166928">
        <id>Q8N5M1</id>
        <label>ATPAF2</label>
    </interactant>
    <organismsDiffer>false</organismsDiffer>
    <experiments>3</experiments>
</comment>
<comment type="interaction">
    <interactant intactId="EBI-10173632">
        <id>P35638-2</id>
    </interactant>
    <interactant intactId="EBI-10312707">
        <id>Q9NR55</id>
        <label>BATF3</label>
    </interactant>
    <organismsDiffer>false</organismsDiffer>
    <experiments>3</experiments>
</comment>
<comment type="interaction">
    <interactant intactId="EBI-10173632">
        <id>P35638-2</id>
    </interactant>
    <interactant intactId="EBI-740209">
        <id>P53567</id>
        <label>CEBPG</label>
    </interactant>
    <organismsDiffer>false</organismsDiffer>
    <experiments>3</experiments>
</comment>
<comment type="interaction">
    <interactant intactId="EBI-10173632">
        <id>P35638-2</id>
    </interactant>
    <interactant intactId="EBI-10241443">
        <id>Q494R4</id>
        <label>DRC12</label>
    </interactant>
    <organismsDiffer>false</organismsDiffer>
    <experiments>3</experiments>
</comment>
<comment type="interaction">
    <interactant intactId="EBI-10173632">
        <id>P35638-2</id>
    </interactant>
    <interactant intactId="EBI-6598631">
        <id>Q7Z589</id>
        <label>EMSY</label>
    </interactant>
    <organismsDiffer>false</organismsDiffer>
    <experiments>3</experiments>
</comment>
<comment type="interaction">
    <interactant intactId="EBI-10173632">
        <id>P35638-2</id>
    </interactant>
    <interactant intactId="EBI-3893419">
        <id>P15408</id>
        <label>FOSL2</label>
    </interactant>
    <organismsDiffer>false</organismsDiffer>
    <experiments>3</experiments>
</comment>
<comment type="interaction">
    <interactant intactId="EBI-10173632">
        <id>P35638-2</id>
    </interactant>
    <interactant intactId="EBI-742664">
        <id>Q9BPX1</id>
        <label>HSD17B14</label>
    </interactant>
    <organismsDiffer>false</organismsDiffer>
    <experiments>3</experiments>
</comment>
<comment type="interaction">
    <interactant intactId="EBI-10173632">
        <id>P35638-2</id>
    </interactant>
    <interactant intactId="EBI-739696">
        <id>P25791</id>
        <label>LMO2</label>
    </interactant>
    <organismsDiffer>false</organismsDiffer>
    <experiments>3</experiments>
</comment>
<comment type="interaction">
    <interactant intactId="EBI-10173632">
        <id>P35638-2</id>
    </interactant>
    <interactant intactId="EBI-749483">
        <id>O75971</id>
        <label>SNAPC5</label>
    </interactant>
    <organismsDiffer>false</organismsDiffer>
    <experiments>3</experiments>
</comment>
<comment type="interaction">
    <interactant intactId="EBI-10173632">
        <id>P35638-2</id>
    </interactant>
    <interactant intactId="EBI-10241785">
        <id>Q4ACW9</id>
        <label>TWEAK</label>
    </interactant>
    <organismsDiffer>false</organismsDiffer>
    <experiments>3</experiments>
</comment>
<comment type="interaction">
    <interactant intactId="EBI-10173632">
        <id>P35638-2</id>
    </interactant>
    <interactant intactId="EBI-2559305">
        <id>A5D8V6</id>
        <label>VPS37C</label>
    </interactant>
    <organismsDiffer>false</organismsDiffer>
    <experiments>3</experiments>
</comment>
<comment type="interaction">
    <interactant intactId="EBI-10173632">
        <id>P35638-2</id>
    </interactant>
    <interactant intactId="EBI-739899">
        <id>P24278</id>
        <label>ZBTB25</label>
    </interactant>
    <organismsDiffer>false</organismsDiffer>
    <experiments>3</experiments>
</comment>
<comment type="interaction">
    <interactant intactId="EBI-10173632">
        <id>P35638-2</id>
    </interactant>
    <interactant intactId="EBI-740660">
        <id>Q6PJT7</id>
        <label>ZC3H14</label>
    </interactant>
    <organismsDiffer>false</organismsDiffer>
    <experiments>3</experiments>
</comment>
<comment type="subcellular location">
    <subcellularLocation>
        <location evidence="17">Cytoplasm</location>
    </subcellularLocation>
    <subcellularLocation>
        <location evidence="17 18">Nucleus</location>
    </subcellularLocation>
    <text evidence="17">Present in the cytoplasm under non-stressed conditions and ER stress leads to its nuclear accumulation.</text>
</comment>
<comment type="alternative products">
    <event type="alternative splicing"/>
    <event type="alternative initiation"/>
    <isoform>
        <id>P35638-1</id>
        <name>1</name>
        <sequence type="displayed"/>
    </isoform>
    <isoform>
        <id>P35638-2</id>
        <name>2</name>
        <sequence type="described" ref="VSP_047277"/>
    </isoform>
    <isoform>
        <id>P0DPQ6-1</id>
        <name>AltDDIT3</name>
        <sequence type="external"/>
    </isoform>
</comment>
<comment type="induction">
    <text evidence="13 14 18">Up-regulated by oxidative stress, amino-acid deprivation, hypoxia and endoplasmic reticulum stress (PubMed:33384352). During ER stress, induced by a EIF2AK3/ATF4 pathway and/or ERN1/ATF6 pathway. Expression is suppressed by TLR-TRIF signaling pathway during prolonged ER stress.</text>
</comment>
<comment type="domain">
    <text>The N-terminal region is necessary for its proteasomal degradation, transcriptional activity and interaction with EP300/P300.</text>
</comment>
<comment type="PTM">
    <text evidence="10">Ubiquitinated, leading to its degradation by the proteasome.</text>
</comment>
<comment type="PTM">
    <text evidence="1">Phosphorylation at serine residues by MAPK14 enhances its transcriptional activation activity while phosphorylation at serine residues by CK2 inhibits its transcriptional activation activity.</text>
</comment>
<comment type="disease" evidence="19">
    <disease id="DI-03715">
        <name>Myxoid liposarcoma</name>
        <acronym>MXLIPO</acronym>
        <description>A soft tissue tumor that tends to occur in the limbs (especially the thigh) of patients ranging in age from 35 to 55 years. It is defined by the presence of a hypocellular spindle cell proliferation set in a myxoid background, often with mucin pooling. Lipoblasts tend to be small and often monovacuolated and to cluster around vessels or at the periphery of the lesion.</description>
        <dbReference type="MIM" id="613488"/>
    </disease>
    <text evidence="19">The gene represented in this entry may be involved in disease pathogenesis. A chromosomal aberration involving DDIT3 has been found in a patient with malignant myxoid liposarcoma. Translocation t(12;16)(q13;p11) with FUS (PubMed:7503811).</text>
</comment>
<comment type="similarity">
    <text evidence="21">Belongs to the bZIP family.</text>
</comment>
<comment type="sequence caution" evidence="21">
    <conflict type="miscellaneous discrepancy">
        <sequence resource="EMBL-CDS" id="AAB27103"/>
    </conflict>
    <text>Contaminating sequence. Sequence of unknown origin in the N-terminal part.</text>
</comment>
<comment type="online information" name="Atlas of Genetics and Cytogenetics in Oncology and Haematology">
    <link uri="https://atlasgeneticsoncology.org/gene/80/DDIT3"/>
</comment>
<reference key="1">
    <citation type="journal article" date="1992" name="Gene">
        <title>Isolation, characterization and chromosomal localization of the human GADD153 gene.</title>
        <authorList>
            <person name="Park J.S."/>
            <person name="Luethy J.D."/>
            <person name="Wang M.G."/>
            <person name="Fargnoli J."/>
            <person name="Fornace A.J. Jr."/>
            <person name="McBride O.W."/>
            <person name="Holbrook N.J."/>
        </authorList>
    </citation>
    <scope>NUCLEOTIDE SEQUENCE [MRNA] (ISOFORM 1)</scope>
</reference>
<reference key="2">
    <citation type="journal article" date="1993" name="Nature">
        <title>Fusion of CHOP to a novel RNA-binding protein in human myxoid liposarcoma.</title>
        <authorList>
            <person name="Crozat A."/>
            <person name="Aman P."/>
            <person name="Mandahl N."/>
            <person name="Ron D."/>
        </authorList>
    </citation>
    <scope>NUCLEOTIDE SEQUENCE [MRNA] (ISOFORM 1)</scope>
</reference>
<reference key="3">
    <citation type="journal article" date="1993" name="Nat. Genet.">
        <title>Fusion of the dominant negative transcription regulator CHOP with a novel gene FUS by translocation t(12;16) in malignant liposarcoma.</title>
        <authorList>
            <person name="Rabbitts T.H."/>
            <person name="Forster A."/>
            <person name="Larson R."/>
            <person name="Nathan P."/>
        </authorList>
    </citation>
    <scope>NUCLEOTIDE SEQUENCE [MRNA] (ISOFORM 1)</scope>
    <scope>INVOLVEMENT IN MXLIPO</scope>
    <scope>CHROMOSOMAL TRANSLOCATION WITH FUS</scope>
</reference>
<reference key="4">
    <citation type="submission" date="2003-10" db="EMBL/GenBank/DDBJ databases">
        <authorList>
            <person name="Li X."/>
            <person name="Xie Y."/>
            <person name="Mao Y."/>
        </authorList>
    </citation>
    <scope>NUCLEOTIDE SEQUENCE [LARGE SCALE MRNA] (ISOFORM 2)</scope>
</reference>
<reference key="5">
    <citation type="submission" date="2005-01" db="EMBL/GenBank/DDBJ databases">
        <authorList>
            <consortium name="NIEHS SNPs program"/>
        </authorList>
    </citation>
    <scope>NUCLEOTIDE SEQUENCE [GENOMIC DNA]</scope>
</reference>
<reference key="6">
    <citation type="journal article" date="2006" name="Nature">
        <title>The finished DNA sequence of human chromosome 12.</title>
        <authorList>
            <person name="Scherer S.E."/>
            <person name="Muzny D.M."/>
            <person name="Buhay C.J."/>
            <person name="Chen R."/>
            <person name="Cree A."/>
            <person name="Ding Y."/>
            <person name="Dugan-Rocha S."/>
            <person name="Gill R."/>
            <person name="Gunaratne P."/>
            <person name="Harris R.A."/>
            <person name="Hawes A.C."/>
            <person name="Hernandez J."/>
            <person name="Hodgson A.V."/>
            <person name="Hume J."/>
            <person name="Jackson A."/>
            <person name="Khan Z.M."/>
            <person name="Kovar-Smith C."/>
            <person name="Lewis L.R."/>
            <person name="Lozado R.J."/>
            <person name="Metzker M.L."/>
            <person name="Milosavljevic A."/>
            <person name="Miner G.R."/>
            <person name="Montgomery K.T."/>
            <person name="Morgan M.B."/>
            <person name="Nazareth L.V."/>
            <person name="Scott G."/>
            <person name="Sodergren E."/>
            <person name="Song X.-Z."/>
            <person name="Steffen D."/>
            <person name="Lovering R.C."/>
            <person name="Wheeler D.A."/>
            <person name="Worley K.C."/>
            <person name="Yuan Y."/>
            <person name="Zhang Z."/>
            <person name="Adams C.Q."/>
            <person name="Ansari-Lari M.A."/>
            <person name="Ayele M."/>
            <person name="Brown M.J."/>
            <person name="Chen G."/>
            <person name="Chen Z."/>
            <person name="Clerc-Blankenburg K.P."/>
            <person name="Davis C."/>
            <person name="Delgado O."/>
            <person name="Dinh H.H."/>
            <person name="Draper H."/>
            <person name="Gonzalez-Garay M.L."/>
            <person name="Havlak P."/>
            <person name="Jackson L.R."/>
            <person name="Jacob L.S."/>
            <person name="Kelly S.H."/>
            <person name="Li L."/>
            <person name="Li Z."/>
            <person name="Liu J."/>
            <person name="Liu W."/>
            <person name="Lu J."/>
            <person name="Maheshwari M."/>
            <person name="Nguyen B.-V."/>
            <person name="Okwuonu G.O."/>
            <person name="Pasternak S."/>
            <person name="Perez L.M."/>
            <person name="Plopper F.J.H."/>
            <person name="Santibanez J."/>
            <person name="Shen H."/>
            <person name="Tabor P.E."/>
            <person name="Verduzco D."/>
            <person name="Waldron L."/>
            <person name="Wang Q."/>
            <person name="Williams G.A."/>
            <person name="Zhang J."/>
            <person name="Zhou J."/>
            <person name="Allen C.C."/>
            <person name="Amin A.G."/>
            <person name="Anyalebechi V."/>
            <person name="Bailey M."/>
            <person name="Barbaria J.A."/>
            <person name="Bimage K.E."/>
            <person name="Bryant N.P."/>
            <person name="Burch P.E."/>
            <person name="Burkett C.E."/>
            <person name="Burrell K.L."/>
            <person name="Calderon E."/>
            <person name="Cardenas V."/>
            <person name="Carter K."/>
            <person name="Casias K."/>
            <person name="Cavazos I."/>
            <person name="Cavazos S.R."/>
            <person name="Ceasar H."/>
            <person name="Chacko J."/>
            <person name="Chan S.N."/>
            <person name="Chavez D."/>
            <person name="Christopoulos C."/>
            <person name="Chu J."/>
            <person name="Cockrell R."/>
            <person name="Cox C.D."/>
            <person name="Dang M."/>
            <person name="Dathorne S.R."/>
            <person name="David R."/>
            <person name="Davis C.M."/>
            <person name="Davy-Carroll L."/>
            <person name="Deshazo D.R."/>
            <person name="Donlin J.E."/>
            <person name="D'Souza L."/>
            <person name="Eaves K.A."/>
            <person name="Egan A."/>
            <person name="Emery-Cohen A.J."/>
            <person name="Escotto M."/>
            <person name="Flagg N."/>
            <person name="Forbes L.D."/>
            <person name="Gabisi A.M."/>
            <person name="Garza M."/>
            <person name="Hamilton C."/>
            <person name="Henderson N."/>
            <person name="Hernandez O."/>
            <person name="Hines S."/>
            <person name="Hogues M.E."/>
            <person name="Huang M."/>
            <person name="Idlebird D.G."/>
            <person name="Johnson R."/>
            <person name="Jolivet A."/>
            <person name="Jones S."/>
            <person name="Kagan R."/>
            <person name="King L.M."/>
            <person name="Leal B."/>
            <person name="Lebow H."/>
            <person name="Lee S."/>
            <person name="LeVan J.M."/>
            <person name="Lewis L.C."/>
            <person name="London P."/>
            <person name="Lorensuhewa L.M."/>
            <person name="Loulseged H."/>
            <person name="Lovett D.A."/>
            <person name="Lucier A."/>
            <person name="Lucier R.L."/>
            <person name="Ma J."/>
            <person name="Madu R.C."/>
            <person name="Mapua P."/>
            <person name="Martindale A.D."/>
            <person name="Martinez E."/>
            <person name="Massey E."/>
            <person name="Mawhiney S."/>
            <person name="Meador M.G."/>
            <person name="Mendez S."/>
            <person name="Mercado C."/>
            <person name="Mercado I.C."/>
            <person name="Merritt C.E."/>
            <person name="Miner Z.L."/>
            <person name="Minja E."/>
            <person name="Mitchell T."/>
            <person name="Mohabbat F."/>
            <person name="Mohabbat K."/>
            <person name="Montgomery B."/>
            <person name="Moore N."/>
            <person name="Morris S."/>
            <person name="Munidasa M."/>
            <person name="Ngo R.N."/>
            <person name="Nguyen N.B."/>
            <person name="Nickerson E."/>
            <person name="Nwaokelemeh O.O."/>
            <person name="Nwokenkwo S."/>
            <person name="Obregon M."/>
            <person name="Oguh M."/>
            <person name="Oragunye N."/>
            <person name="Oviedo R.J."/>
            <person name="Parish B.J."/>
            <person name="Parker D.N."/>
            <person name="Parrish J."/>
            <person name="Parks K.L."/>
            <person name="Paul H.A."/>
            <person name="Payton B.A."/>
            <person name="Perez A."/>
            <person name="Perrin W."/>
            <person name="Pickens A."/>
            <person name="Primus E.L."/>
            <person name="Pu L.-L."/>
            <person name="Puazo M."/>
            <person name="Quiles M.M."/>
            <person name="Quiroz J.B."/>
            <person name="Rabata D."/>
            <person name="Reeves K."/>
            <person name="Ruiz S.J."/>
            <person name="Shao H."/>
            <person name="Sisson I."/>
            <person name="Sonaike T."/>
            <person name="Sorelle R.P."/>
            <person name="Sutton A.E."/>
            <person name="Svatek A.F."/>
            <person name="Svetz L.A."/>
            <person name="Tamerisa K.S."/>
            <person name="Taylor T.R."/>
            <person name="Teague B."/>
            <person name="Thomas N."/>
            <person name="Thorn R.D."/>
            <person name="Trejos Z.Y."/>
            <person name="Trevino B.K."/>
            <person name="Ukegbu O.N."/>
            <person name="Urban J.B."/>
            <person name="Vasquez L.I."/>
            <person name="Vera V.A."/>
            <person name="Villasana D.M."/>
            <person name="Wang L."/>
            <person name="Ward-Moore S."/>
            <person name="Warren J.T."/>
            <person name="Wei X."/>
            <person name="White F."/>
            <person name="Williamson A.L."/>
            <person name="Wleczyk R."/>
            <person name="Wooden H.S."/>
            <person name="Wooden S.H."/>
            <person name="Yen J."/>
            <person name="Yoon L."/>
            <person name="Yoon V."/>
            <person name="Zorrilla S.E."/>
            <person name="Nelson D."/>
            <person name="Kucherlapati R."/>
            <person name="Weinstock G."/>
            <person name="Gibbs R.A."/>
        </authorList>
    </citation>
    <scope>NUCLEOTIDE SEQUENCE [LARGE SCALE GENOMIC DNA]</scope>
</reference>
<reference key="7">
    <citation type="journal article" date="2004" name="Genome Res.">
        <title>The status, quality, and expansion of the NIH full-length cDNA project: the Mammalian Gene Collection (MGC).</title>
        <authorList>
            <consortium name="The MGC Project Team"/>
        </authorList>
    </citation>
    <scope>NUCLEOTIDE SEQUENCE [LARGE SCALE MRNA] (ISOFORM 1)</scope>
    <source>
        <tissue>Muscle</tissue>
    </source>
</reference>
<reference key="8">
    <citation type="journal article" date="2004" name="Cell Death Differ.">
        <title>Roles of CHOP/GADD153 in endoplasmic reticulum stress.</title>
        <authorList>
            <person name="Oyadomari S."/>
            <person name="Mori M."/>
        </authorList>
    </citation>
    <scope>REVIEW</scope>
</reference>
<reference key="9">
    <citation type="journal article" date="2004" name="J. Biol. Chem.">
        <title>CHOP is involved in endoplasmic reticulum stress-induced apoptosis by enhancing DR5 expression in human carcinoma cells.</title>
        <authorList>
            <person name="Yamaguchi H."/>
            <person name="Wang H.G."/>
        </authorList>
    </citation>
    <scope>FUNCTION</scope>
</reference>
<reference key="10">
    <citation type="journal article" date="2005" name="EMBO J.">
        <title>TRB3, a novel ER stress-inducible gene, is induced via ATF4-CHOP pathway and is involved in cell death.</title>
        <authorList>
            <person name="Ohoka N."/>
            <person name="Yoshii S."/>
            <person name="Hattori T."/>
            <person name="Onozaki K."/>
            <person name="Hayashi H."/>
        </authorList>
    </citation>
    <scope>FUNCTION</scope>
    <scope>INTERACTION WITH TRIB3</scope>
</reference>
<reference key="11">
    <citation type="journal article" date="2006" name="Oncogene">
        <title>The C/EBP homologous protein CHOP (GADD153) is an inhibitor of Wnt/TCF signals.</title>
        <authorList>
            <person name="Horndasch M."/>
            <person name="Lienkamp S."/>
            <person name="Springer E."/>
            <person name="Schmitt A."/>
            <person name="Pavenstaedt H."/>
            <person name="Walz G."/>
            <person name="Gloy J."/>
        </authorList>
    </citation>
    <scope>FUNCTION</scope>
    <scope>INTERACTION WITH TCF7L2</scope>
</reference>
<reference key="12">
    <citation type="journal article" date="2007" name="J. Biol. Chem.">
        <title>Critical and functional regulation of CHOP (C/EBP homologous protein) through the N-terminal portion.</title>
        <authorList>
            <person name="Ohoka N."/>
            <person name="Hattori T."/>
            <person name="Kitagawa M."/>
            <person name="Onozaki K."/>
            <person name="Hayashi H."/>
        </authorList>
    </citation>
    <scope>N-TERMINAL REGION</scope>
    <scope>SUBCELLULAR LOCATION</scope>
    <scope>INTERACTION WITH TRIB3; EP300; HDAC1; HDAC5 AND HDAC6</scope>
    <scope>UBIQUITINATION</scope>
    <scope>PROTEASOMAL DEGRADATION</scope>
</reference>
<reference key="13">
    <citation type="journal article" date="2008" name="Am. J. Respir. Cell Mol. Biol.">
        <title>CHOP transcription factor mediates IL-8 signaling in cystic fibrosis bronchial epithelial cells.</title>
        <authorList>
            <person name="Vij N."/>
            <person name="Amoako M.O."/>
            <person name="Mazur S."/>
            <person name="Zeitlin P.L."/>
        </authorList>
    </citation>
    <scope>FUNCTION</scope>
</reference>
<reference key="14">
    <citation type="journal article" date="2008" name="J. Biol. Chem.">
        <title>C/EBP homology protein (CHOP) interacts with activating transcription factor 4 (ATF4) and negatively regulates the stress-dependent induction of the asparagine synthetase gene.</title>
        <authorList>
            <person name="Su N."/>
            <person name="Kilberg M.S."/>
        </authorList>
    </citation>
    <scope>FUNCTION</scope>
    <scope>INTERACTION WITH ATF4</scope>
</reference>
<reference key="15">
    <citation type="journal article" date="2009" name="Nat. Cell Biol.">
        <title>Adaptive suppression of the ATF4-CHOP branch of the unfolded protein response by toll-like receptor signalling.</title>
        <authorList>
            <person name="Woo C.W."/>
            <person name="Cui D."/>
            <person name="Arellano J."/>
            <person name="Dorweiler B."/>
            <person name="Harding H."/>
            <person name="Fitzgerald K.A."/>
            <person name="Ron D."/>
            <person name="Tabas I."/>
        </authorList>
    </citation>
    <scope>INDUCTION</scope>
</reference>
<reference key="16">
    <citation type="journal article" date="2009" name="PLoS ONE">
        <title>ER stress-inducible factor CHOP affects the expression of hepcidin by modulating C/EBPalpha activity.</title>
        <authorList>
            <person name="Oliveira S.J."/>
            <person name="Pinto J.P."/>
            <person name="Picarote G."/>
            <person name="Costa V.M."/>
            <person name="Carvalho F."/>
            <person name="Rangel M."/>
            <person name="de Sousa M."/>
            <person name="de Almeida S.F."/>
        </authorList>
    </citation>
    <scope>FUNCTION</scope>
</reference>
<reference key="17">
    <citation type="journal article" date="2010" name="J. Biol. Chem.">
        <title>Endoplasmic reticulum stress-activated C/EBP homologous protein enhances nuclear factor-kappaB signals via repression of peroxisome proliferator-activated receptor gamma.</title>
        <authorList>
            <person name="Park S.H."/>
            <person name="Choi H.J."/>
            <person name="Yang H."/>
            <person name="Do K.H."/>
            <person name="Kim J."/>
            <person name="Lee D.W."/>
            <person name="Moon Y."/>
        </authorList>
    </citation>
    <scope>FUNCTION</scope>
    <scope>SUBCELLULAR LOCATION</scope>
    <scope>INTERACTION WITH CEBPB</scope>
    <scope>INDUCTION</scope>
</reference>
<reference key="18">
    <citation type="journal article" date="2010" name="Proc. Natl. Acad. Sci. U.S.A.">
        <title>Endoplasmic reticulum stress-induced transcription factor, CHOP, is crucial for dendritic cell IL-23 expression.</title>
        <authorList>
            <person name="Goodall J.C."/>
            <person name="Wu C."/>
            <person name="Zhang Y."/>
            <person name="McNeill L."/>
            <person name="Ellis L."/>
            <person name="Saudek V."/>
            <person name="Gaston J.S."/>
        </authorList>
    </citation>
    <scope>FUNCTION</scope>
</reference>
<reference key="19">
    <citation type="journal article" date="2012" name="J. Biochem.">
        <title>CHOP is a multifunctional transcription factor in the ER stress response.</title>
        <authorList>
            <person name="Nishitoh H."/>
        </authorList>
    </citation>
    <scope>REVIEW</scope>
</reference>
<reference key="20">
    <citation type="journal article" date="2012" name="PLoS ONE">
        <title>CHOP potentially co-operates with FOXO3a in neuronal cells to regulate PUMA and BIM expression in response to ER stress.</title>
        <authorList>
            <person name="Ghosh A.P."/>
            <person name="Klocke B.J."/>
            <person name="Ballestas M.E."/>
            <person name="Roth K.A."/>
        </authorList>
    </citation>
    <scope>FUNCTION</scope>
    <scope>INTERACTION WITH FOXO3</scope>
    <scope>SUBCELLULAR LOCATION</scope>
</reference>
<reference key="21">
    <citation type="journal article" date="2017" name="Elife">
        <title>Deep transcriptome annotation enables the discovery and functional characterization of cryptic small proteins.</title>
        <authorList>
            <person name="Samandi S."/>
            <person name="Roy A.V."/>
            <person name="Delcourt V."/>
            <person name="Lucier J.F."/>
            <person name="Gagnon J."/>
            <person name="Beaudoin M.C."/>
            <person name="Vanderperre B."/>
            <person name="Breton M.A."/>
            <person name="Motard J."/>
            <person name="Jacques J.F."/>
            <person name="Brunelle M."/>
            <person name="Gagnon-Arsenault I."/>
            <person name="Fournier I."/>
            <person name="Ouangraoua A."/>
            <person name="Hunting D.J."/>
            <person name="Cohen A.A."/>
            <person name="Landry C.R."/>
            <person name="Scott M.S."/>
            <person name="Roucou X."/>
        </authorList>
    </citation>
    <scope>SUBCELLULAR LOCATION</scope>
    <scope>ALTERNATIVE INITIATION (ISOFORM ALTDDIT3)</scope>
    <scope>SUBUNIT</scope>
</reference>
<reference key="22">
    <citation type="journal article" date="2021" name="Science">
        <title>QRICH1 dictates the outcome of ER stress through transcriptional control of proteostasis.</title>
        <authorList>
            <person name="You K."/>
            <person name="Wang L."/>
            <person name="Chou C.H."/>
            <person name="Liu K."/>
            <person name="Nakata T."/>
            <person name="Jaiswal A."/>
            <person name="Yao J."/>
            <person name="Lefkovith A."/>
            <person name="Omar A."/>
            <person name="Perrigoue J.G."/>
            <person name="Towne J.E."/>
            <person name="Regev A."/>
            <person name="Graham D.B."/>
            <person name="Xavier R.J."/>
        </authorList>
    </citation>
    <scope>SUBCELLULAR LOCATION</scope>
    <scope>INDUCTION BY ER STRESS</scope>
</reference>
<reference key="23">
    <citation type="journal article" date="2006" name="Science">
        <title>The consensus coding sequences of human breast and colorectal cancers.</title>
        <authorList>
            <person name="Sjoeblom T."/>
            <person name="Jones S."/>
            <person name="Wood L.D."/>
            <person name="Parsons D.W."/>
            <person name="Lin J."/>
            <person name="Barber T.D."/>
            <person name="Mandelker D."/>
            <person name="Leary R.J."/>
            <person name="Ptak J."/>
            <person name="Silliman N."/>
            <person name="Szabo S."/>
            <person name="Buckhaults P."/>
            <person name="Farrell C."/>
            <person name="Meeh P."/>
            <person name="Markowitz S.D."/>
            <person name="Willis J."/>
            <person name="Dawson D."/>
            <person name="Willson J.K.V."/>
            <person name="Gazdar A.F."/>
            <person name="Hartigan J."/>
            <person name="Wu L."/>
            <person name="Liu C."/>
            <person name="Parmigiani G."/>
            <person name="Park B.H."/>
            <person name="Bachman K.E."/>
            <person name="Papadopoulos N."/>
            <person name="Vogelstein B."/>
            <person name="Kinzler K.W."/>
            <person name="Velculescu V.E."/>
        </authorList>
    </citation>
    <scope>VARIANT [LARGE SCALE ANALYSIS] VAL-115</scope>
</reference>
<name>DDIT3_HUMAN</name>
<dbReference type="EMBL" id="S40706">
    <property type="protein sequence ID" value="AAB22646.1"/>
    <property type="molecule type" value="mRNA"/>
</dbReference>
<dbReference type="EMBL" id="S62138">
    <property type="protein sequence ID" value="AAB27103.1"/>
    <property type="status" value="ALT_SEQ"/>
    <property type="molecule type" value="mRNA"/>
</dbReference>
<dbReference type="EMBL" id="AY461580">
    <property type="status" value="NOT_ANNOTATED_CDS"/>
    <property type="molecule type" value="mRNA"/>
</dbReference>
<dbReference type="EMBL" id="AY880949">
    <property type="protein sequence ID" value="AAW56077.1"/>
    <property type="molecule type" value="Genomic_DNA"/>
</dbReference>
<dbReference type="EMBL" id="AC022506">
    <property type="status" value="NOT_ANNOTATED_CDS"/>
    <property type="molecule type" value="Genomic_DNA"/>
</dbReference>
<dbReference type="EMBL" id="BC003637">
    <property type="protein sequence ID" value="AAH03637.1"/>
    <property type="molecule type" value="mRNA"/>
</dbReference>
<dbReference type="CCDS" id="CCDS55838.1">
    <molecule id="P35638-2"/>
</dbReference>
<dbReference type="CCDS" id="CCDS8943.1">
    <molecule id="P35638-1"/>
</dbReference>
<dbReference type="PIR" id="JC1169">
    <property type="entry name" value="JC1169"/>
</dbReference>
<dbReference type="PIR" id="S33798">
    <property type="entry name" value="S33798"/>
</dbReference>
<dbReference type="RefSeq" id="NP_001181982.1">
    <molecule id="P35638-2"/>
    <property type="nucleotide sequence ID" value="NM_001195053.1"/>
</dbReference>
<dbReference type="RefSeq" id="NP_001181983.1">
    <molecule id="P35638-2"/>
    <property type="nucleotide sequence ID" value="NM_001195054.1"/>
</dbReference>
<dbReference type="RefSeq" id="NP_001181984.1">
    <molecule id="P35638-2"/>
    <property type="nucleotide sequence ID" value="NM_001195055.1"/>
</dbReference>
<dbReference type="RefSeq" id="NP_001181985.1">
    <molecule id="P35638-2"/>
    <property type="nucleotide sequence ID" value="NM_001195056.1"/>
</dbReference>
<dbReference type="RefSeq" id="NP_001181986.1">
    <molecule id="P35638-1"/>
    <property type="nucleotide sequence ID" value="NM_001195057.1"/>
</dbReference>
<dbReference type="RefSeq" id="NP_001400570.1">
    <molecule id="P35638-1"/>
    <property type="nucleotide sequence ID" value="NM_001413641.1"/>
</dbReference>
<dbReference type="RefSeq" id="NP_001400571.1">
    <molecule id="P35638-1"/>
    <property type="nucleotide sequence ID" value="NM_001413642.1"/>
</dbReference>
<dbReference type="RefSeq" id="NP_004074.2">
    <molecule id="P35638-1"/>
    <property type="nucleotide sequence ID" value="NM_004083.5"/>
</dbReference>
<dbReference type="SMR" id="P35638"/>
<dbReference type="BioGRID" id="108016">
    <property type="interactions" value="121"/>
</dbReference>
<dbReference type="ComplexPortal" id="CPX-2496">
    <property type="entry name" value="bZIP transcription factor complex, BACH1-DDIT3"/>
</dbReference>
<dbReference type="ComplexPortal" id="CPX-6415">
    <property type="entry name" value="bZIP transcription factor complex, ATF2-DDIT3"/>
</dbReference>
<dbReference type="ComplexPortal" id="CPX-6473">
    <property type="entry name" value="bZIP transcription factor complex, ATF3-DDIT3"/>
</dbReference>
<dbReference type="ComplexPortal" id="CPX-6543">
    <property type="entry name" value="bZIP transcription factor complex, ATF4-DDIT3"/>
</dbReference>
<dbReference type="ComplexPortal" id="CPX-6784">
    <property type="entry name" value="bZIP transcription factor complex, ATF7-DDIT3"/>
</dbReference>
<dbReference type="ComplexPortal" id="CPX-69">
    <property type="entry name" value="bZIP transcription factor complex, CEBPA-DDIT3"/>
</dbReference>
<dbReference type="ComplexPortal" id="CPX-70">
    <property type="entry name" value="bZIP transcription factor complex, CEBPB-DDIT3"/>
</dbReference>
<dbReference type="ComplexPortal" id="CPX-7004">
    <property type="entry name" value="bZIP transcription factor complex, BATF-DDIT3"/>
</dbReference>
<dbReference type="ComplexPortal" id="CPX-7064">
    <property type="entry name" value="bZIP transcription factor complex, BATF2-DDIT3"/>
</dbReference>
<dbReference type="ComplexPortal" id="CPX-7106">
    <property type="entry name" value="bZIP transcription factor complex, BATF3-DDIT3"/>
</dbReference>
<dbReference type="CORUM" id="P35638"/>
<dbReference type="DIP" id="DIP-41589N"/>
<dbReference type="FunCoup" id="P35638">
    <property type="interactions" value="879"/>
</dbReference>
<dbReference type="IntAct" id="P35638">
    <property type="interactions" value="78"/>
</dbReference>
<dbReference type="MINT" id="P35638"/>
<dbReference type="STRING" id="9606.ENSP00000448665"/>
<dbReference type="ChEMBL" id="CHEMBL3351207"/>
<dbReference type="GlyGen" id="P35638">
    <property type="glycosylation" value="1 site, 1 O-linked glycan (1 site)"/>
</dbReference>
<dbReference type="iPTMnet" id="P35638"/>
<dbReference type="PhosphoSitePlus" id="P35638"/>
<dbReference type="BioMuta" id="DDIT3"/>
<dbReference type="DMDM" id="544022"/>
<dbReference type="jPOST" id="P35638"/>
<dbReference type="MassIVE" id="P35638"/>
<dbReference type="PaxDb" id="9606-ENSP00000448665"/>
<dbReference type="PeptideAtlas" id="P35638"/>
<dbReference type="Antibodypedia" id="4408">
    <property type="antibodies" value="1066 antibodies from 44 providers"/>
</dbReference>
<dbReference type="CPTC" id="P35638">
    <property type="antibodies" value="3 antibodies"/>
</dbReference>
<dbReference type="DNASU" id="1649"/>
<dbReference type="Ensembl" id="ENST00000346473.8">
    <molecule id="P35638-1"/>
    <property type="protein sequence ID" value="ENSP00000340671.3"/>
    <property type="gene ID" value="ENSG00000175197.13"/>
</dbReference>
<dbReference type="Ensembl" id="ENST00000547303.5">
    <molecule id="P35638-1"/>
    <property type="protein sequence ID" value="ENSP00000447188.1"/>
    <property type="gene ID" value="ENSG00000175197.13"/>
</dbReference>
<dbReference type="Ensembl" id="ENST00000551116.5">
    <molecule id="P35638-2"/>
    <property type="protein sequence ID" value="ENSP00000448665.1"/>
    <property type="gene ID" value="ENSG00000175197.13"/>
</dbReference>
<dbReference type="Ensembl" id="ENST00000552740.5">
    <molecule id="P35638-2"/>
    <property type="protein sequence ID" value="ENSP00000447803.1"/>
    <property type="gene ID" value="ENSG00000175197.13"/>
</dbReference>
<dbReference type="Ensembl" id="ENST00000623876.2">
    <molecule id="P35638-1"/>
    <property type="protein sequence ID" value="ENSP00000494844.1"/>
    <property type="gene ID" value="ENSG00000175197.13"/>
</dbReference>
<dbReference type="GeneID" id="1649"/>
<dbReference type="KEGG" id="hsa:1649"/>
<dbReference type="MANE-Select" id="ENST00000346473.8">
    <property type="protein sequence ID" value="ENSP00000340671.3"/>
    <property type="RefSeq nucleotide sequence ID" value="NM_004083.6"/>
    <property type="RefSeq protein sequence ID" value="NP_004074.2"/>
</dbReference>
<dbReference type="UCSC" id="uc009zps.4">
    <molecule id="P35638-1"/>
    <property type="organism name" value="human"/>
</dbReference>
<dbReference type="AGR" id="HGNC:2726"/>
<dbReference type="CTD" id="1649"/>
<dbReference type="DisGeNET" id="1649"/>
<dbReference type="GeneCards" id="DDIT3"/>
<dbReference type="HGNC" id="HGNC:2726">
    <property type="gene designation" value="DDIT3"/>
</dbReference>
<dbReference type="HPA" id="ENSG00000175197">
    <property type="expression patterns" value="Low tissue specificity"/>
</dbReference>
<dbReference type="MalaCards" id="DDIT3"/>
<dbReference type="MIM" id="126337">
    <property type="type" value="gene"/>
</dbReference>
<dbReference type="MIM" id="613488">
    <property type="type" value="phenotype"/>
</dbReference>
<dbReference type="neXtProt" id="NX_P35638"/>
<dbReference type="OpenTargets" id="ENSG00000175197"/>
<dbReference type="Orphanet" id="99967">
    <property type="disease" value="Myxoid/round cell liposarcoma"/>
</dbReference>
<dbReference type="PharmGKB" id="PA27193"/>
<dbReference type="VEuPathDB" id="HostDB:ENSG00000175197"/>
<dbReference type="eggNOG" id="KOG3119">
    <property type="taxonomic scope" value="Eukaryota"/>
</dbReference>
<dbReference type="GeneTree" id="ENSGT00390000006305"/>
<dbReference type="HOGENOM" id="CLU_135108_0_0_1"/>
<dbReference type="InParanoid" id="P35638"/>
<dbReference type="OMA" id="MVNLHKA"/>
<dbReference type="OrthoDB" id="9753710at2759"/>
<dbReference type="PAN-GO" id="P35638">
    <property type="GO annotations" value="14 GO annotations based on evolutionary models"/>
</dbReference>
<dbReference type="PhylomeDB" id="P35638"/>
<dbReference type="TreeFam" id="TF105006"/>
<dbReference type="PathwayCommons" id="P35638"/>
<dbReference type="Reactome" id="R-HSA-380994">
    <property type="pathway name" value="ATF4 activates genes in response to endoplasmic reticulum stress"/>
</dbReference>
<dbReference type="Reactome" id="R-HSA-381183">
    <property type="pathway name" value="ATF6 (ATF6-alpha) activates chaperone genes"/>
</dbReference>
<dbReference type="Reactome" id="R-HSA-9614657">
    <property type="pathway name" value="FOXO-mediated transcription of cell death genes"/>
</dbReference>
<dbReference type="Reactome" id="R-HSA-9633012">
    <property type="pathway name" value="Response of EIF2AK4 (GCN2) to amino acid deficiency"/>
</dbReference>
<dbReference type="Reactome" id="R-HSA-9648895">
    <property type="pathway name" value="Response of EIF2AK1 (HRI) to heme deficiency"/>
</dbReference>
<dbReference type="SignaLink" id="P35638"/>
<dbReference type="SIGNOR" id="P35638"/>
<dbReference type="BioGRID-ORCS" id="1649">
    <property type="hits" value="33 hits in 1178 CRISPR screens"/>
</dbReference>
<dbReference type="ChiTaRS" id="DDIT3">
    <property type="organism name" value="human"/>
</dbReference>
<dbReference type="GeneWiki" id="DNA_damage-inducible_transcript_3"/>
<dbReference type="GenomeRNAi" id="1649"/>
<dbReference type="Pharos" id="P35638">
    <property type="development level" value="Tchem"/>
</dbReference>
<dbReference type="PRO" id="PR:P35638"/>
<dbReference type="Proteomes" id="UP000005640">
    <property type="component" value="Chromosome 12"/>
</dbReference>
<dbReference type="RNAct" id="P35638">
    <property type="molecule type" value="protein"/>
</dbReference>
<dbReference type="Bgee" id="ENSG00000175197">
    <property type="expression patterns" value="Expressed in adenohypophysis and 96 other cell types or tissues"/>
</dbReference>
<dbReference type="ExpressionAtlas" id="P35638">
    <property type="expression patterns" value="baseline and differential"/>
</dbReference>
<dbReference type="GO" id="GO:1990622">
    <property type="term" value="C:CHOP-ATF3 complex"/>
    <property type="evidence" value="ECO:0000314"/>
    <property type="project" value="ParkinsonsUK-UCL"/>
</dbReference>
<dbReference type="GO" id="GO:1990617">
    <property type="term" value="C:CHOP-ATF4 complex"/>
    <property type="evidence" value="ECO:0000314"/>
    <property type="project" value="ParkinsonsUK-UCL"/>
</dbReference>
<dbReference type="GO" id="GO:0036488">
    <property type="term" value="C:CHOP-C/EBP complex"/>
    <property type="evidence" value="ECO:0000353"/>
    <property type="project" value="ComplexPortal"/>
</dbReference>
<dbReference type="GO" id="GO:0000785">
    <property type="term" value="C:chromatin"/>
    <property type="evidence" value="ECO:0000247"/>
    <property type="project" value="NTNU_SB"/>
</dbReference>
<dbReference type="GO" id="GO:0005737">
    <property type="term" value="C:cytoplasm"/>
    <property type="evidence" value="ECO:0000314"/>
    <property type="project" value="UniProtKB"/>
</dbReference>
<dbReference type="GO" id="GO:0005829">
    <property type="term" value="C:cytosol"/>
    <property type="evidence" value="ECO:0000304"/>
    <property type="project" value="ParkinsonsUK-UCL"/>
</dbReference>
<dbReference type="GO" id="GO:0005770">
    <property type="term" value="C:late endosome"/>
    <property type="evidence" value="ECO:0007669"/>
    <property type="project" value="Ensembl"/>
</dbReference>
<dbReference type="GO" id="GO:0005634">
    <property type="term" value="C:nucleus"/>
    <property type="evidence" value="ECO:0000314"/>
    <property type="project" value="UniProtKB"/>
</dbReference>
<dbReference type="GO" id="GO:0032993">
    <property type="term" value="C:protein-DNA complex"/>
    <property type="evidence" value="ECO:0000314"/>
    <property type="project" value="ParkinsonsUK-UCL"/>
</dbReference>
<dbReference type="GO" id="GO:0090575">
    <property type="term" value="C:RNA polymerase II transcription regulator complex"/>
    <property type="evidence" value="ECO:0000353"/>
    <property type="project" value="ComplexPortal"/>
</dbReference>
<dbReference type="GO" id="GO:0005667">
    <property type="term" value="C:transcription regulator complex"/>
    <property type="evidence" value="ECO:0000303"/>
    <property type="project" value="ParkinsonsUK-UCL"/>
</dbReference>
<dbReference type="GO" id="GO:0008140">
    <property type="term" value="F:cAMP response element binding protein binding"/>
    <property type="evidence" value="ECO:0000353"/>
    <property type="project" value="ParkinsonsUK-UCL"/>
</dbReference>
<dbReference type="GO" id="GO:0003677">
    <property type="term" value="F:DNA binding"/>
    <property type="evidence" value="ECO:0000314"/>
    <property type="project" value="UniProtKB"/>
</dbReference>
<dbReference type="GO" id="GO:0001228">
    <property type="term" value="F:DNA-binding transcription activator activity, RNA polymerase II-specific"/>
    <property type="evidence" value="ECO:0000314"/>
    <property type="project" value="NTNU_SB"/>
</dbReference>
<dbReference type="GO" id="GO:0003700">
    <property type="term" value="F:DNA-binding transcription factor activity"/>
    <property type="evidence" value="ECO:0000314"/>
    <property type="project" value="ParkinsonsUK-UCL"/>
</dbReference>
<dbReference type="GO" id="GO:0000981">
    <property type="term" value="F:DNA-binding transcription factor activity, RNA polymerase II-specific"/>
    <property type="evidence" value="ECO:0000247"/>
    <property type="project" value="NTNU_SB"/>
</dbReference>
<dbReference type="GO" id="GO:0042802">
    <property type="term" value="F:identical protein binding"/>
    <property type="evidence" value="ECO:0000353"/>
    <property type="project" value="IntAct"/>
</dbReference>
<dbReference type="GO" id="GO:0043522">
    <property type="term" value="F:leucine zipper domain binding"/>
    <property type="evidence" value="ECO:0000314"/>
    <property type="project" value="ParkinsonsUK-UCL"/>
</dbReference>
<dbReference type="GO" id="GO:0046982">
    <property type="term" value="F:protein heterodimerization activity"/>
    <property type="evidence" value="ECO:0000353"/>
    <property type="project" value="ParkinsonsUK-UCL"/>
</dbReference>
<dbReference type="GO" id="GO:0042803">
    <property type="term" value="F:protein homodimerization activity"/>
    <property type="evidence" value="ECO:0000314"/>
    <property type="project" value="CAFA"/>
</dbReference>
<dbReference type="GO" id="GO:0000978">
    <property type="term" value="F:RNA polymerase II cis-regulatory region sequence-specific DNA binding"/>
    <property type="evidence" value="ECO:0000314"/>
    <property type="project" value="NTNU_SB"/>
</dbReference>
<dbReference type="GO" id="GO:0061629">
    <property type="term" value="F:RNA polymerase II-specific DNA-binding transcription factor binding"/>
    <property type="evidence" value="ECO:0000353"/>
    <property type="project" value="BHF-UCL"/>
</dbReference>
<dbReference type="GO" id="GO:0000976">
    <property type="term" value="F:transcription cis-regulatory region binding"/>
    <property type="evidence" value="ECO:0000314"/>
    <property type="project" value="ParkinsonsUK-UCL"/>
</dbReference>
<dbReference type="GO" id="GO:0003714">
    <property type="term" value="F:transcription corepressor activity"/>
    <property type="evidence" value="ECO:0000314"/>
    <property type="project" value="ARUK-UCL"/>
</dbReference>
<dbReference type="GO" id="GO:0140537">
    <property type="term" value="F:transcription regulator activator activity"/>
    <property type="evidence" value="ECO:0000250"/>
    <property type="project" value="ARUK-UCL"/>
</dbReference>
<dbReference type="GO" id="GO:0140416">
    <property type="term" value="F:transcription regulator inhibitor activity"/>
    <property type="evidence" value="ECO:0000250"/>
    <property type="project" value="ARUK-UCL"/>
</dbReference>
<dbReference type="GO" id="GO:0009948">
    <property type="term" value="P:anterior/posterior axis specification"/>
    <property type="evidence" value="ECO:0000250"/>
    <property type="project" value="BHF-UCL"/>
</dbReference>
<dbReference type="GO" id="GO:0060840">
    <property type="term" value="P:artery development"/>
    <property type="evidence" value="ECO:0007669"/>
    <property type="project" value="Ensembl"/>
</dbReference>
<dbReference type="GO" id="GO:0036500">
    <property type="term" value="P:ATF6-mediated unfolded protein response"/>
    <property type="evidence" value="ECO:0000304"/>
    <property type="project" value="ParkinsonsUK-UCL"/>
</dbReference>
<dbReference type="GO" id="GO:0001955">
    <property type="term" value="P:blood vessel maturation"/>
    <property type="evidence" value="ECO:0007669"/>
    <property type="project" value="Ensembl"/>
</dbReference>
<dbReference type="GO" id="GO:0070509">
    <property type="term" value="P:calcium ion import"/>
    <property type="evidence" value="ECO:0007669"/>
    <property type="project" value="Ensembl"/>
</dbReference>
<dbReference type="GO" id="GO:0045454">
    <property type="term" value="P:cell redox homeostasis"/>
    <property type="evidence" value="ECO:0000314"/>
    <property type="project" value="MGI"/>
</dbReference>
<dbReference type="GO" id="GO:0002086">
    <property type="term" value="P:diaphragm contraction"/>
    <property type="evidence" value="ECO:0007669"/>
    <property type="project" value="Ensembl"/>
</dbReference>
<dbReference type="GO" id="GO:0006974">
    <property type="term" value="P:DNA damage response"/>
    <property type="evidence" value="ECO:0000304"/>
    <property type="project" value="ProtInc"/>
</dbReference>
<dbReference type="GO" id="GO:0030968">
    <property type="term" value="P:endoplasmic reticulum unfolded protein response"/>
    <property type="evidence" value="ECO:0000250"/>
    <property type="project" value="UniProtKB"/>
</dbReference>
<dbReference type="GO" id="GO:0006983">
    <property type="term" value="P:ER overload response"/>
    <property type="evidence" value="ECO:0000318"/>
    <property type="project" value="GO_Central"/>
</dbReference>
<dbReference type="GO" id="GO:0072655">
    <property type="term" value="P:establishment of protein localization to mitochondrion"/>
    <property type="evidence" value="ECO:0007669"/>
    <property type="project" value="Ensembl"/>
</dbReference>
<dbReference type="GO" id="GO:0010467">
    <property type="term" value="P:gene expression"/>
    <property type="evidence" value="ECO:0007669"/>
    <property type="project" value="Ensembl"/>
</dbReference>
<dbReference type="GO" id="GO:0140468">
    <property type="term" value="P:HRI-mediated signaling"/>
    <property type="evidence" value="ECO:0000314"/>
    <property type="project" value="UniProt"/>
</dbReference>
<dbReference type="GO" id="GO:0140467">
    <property type="term" value="P:integrated stress response signaling"/>
    <property type="evidence" value="ECO:0000314"/>
    <property type="project" value="UniProt"/>
</dbReference>
<dbReference type="GO" id="GO:0070059">
    <property type="term" value="P:intrinsic apoptotic signaling pathway in response to endoplasmic reticulum stress"/>
    <property type="evidence" value="ECO:0000314"/>
    <property type="project" value="UniProtKB"/>
</dbReference>
<dbReference type="GO" id="GO:1990442">
    <property type="term" value="P:intrinsic apoptotic signaling pathway in response to nitrosative stress"/>
    <property type="evidence" value="ECO:0007669"/>
    <property type="project" value="Ensembl"/>
</dbReference>
<dbReference type="GO" id="GO:0090090">
    <property type="term" value="P:negative regulation of canonical Wnt signaling pathway"/>
    <property type="evidence" value="ECO:0000250"/>
    <property type="project" value="BHF-UCL"/>
</dbReference>
<dbReference type="GO" id="GO:0120163">
    <property type="term" value="P:negative regulation of cold-induced thermogenesis"/>
    <property type="evidence" value="ECO:0000250"/>
    <property type="project" value="YuBioLab"/>
</dbReference>
<dbReference type="GO" id="GO:2000016">
    <property type="term" value="P:negative regulation of determination of dorsal identity"/>
    <property type="evidence" value="ECO:0000314"/>
    <property type="project" value="BHF-UCL"/>
</dbReference>
<dbReference type="GO" id="GO:0045892">
    <property type="term" value="P:negative regulation of DNA-templated transcription"/>
    <property type="evidence" value="ECO:0000314"/>
    <property type="project" value="UniProtKB"/>
</dbReference>
<dbReference type="GO" id="GO:0045599">
    <property type="term" value="P:negative regulation of fat cell differentiation"/>
    <property type="evidence" value="ECO:0007669"/>
    <property type="project" value="Ensembl"/>
</dbReference>
<dbReference type="GO" id="GO:0032700">
    <property type="term" value="P:negative regulation of interleukin-17 production"/>
    <property type="evidence" value="ECO:0000315"/>
    <property type="project" value="ARUK-UCL"/>
</dbReference>
<dbReference type="GO" id="GO:0032713">
    <property type="term" value="P:negative regulation of interleukin-4 production"/>
    <property type="evidence" value="ECO:0000315"/>
    <property type="project" value="ARUK-UCL"/>
</dbReference>
<dbReference type="GO" id="GO:0045662">
    <property type="term" value="P:negative regulation of myoblast differentiation"/>
    <property type="evidence" value="ECO:0007669"/>
    <property type="project" value="Ensembl"/>
</dbReference>
<dbReference type="GO" id="GO:0051898">
    <property type="term" value="P:negative regulation of phosphatidylinositol 3-kinase/protein kinase B signal transduction"/>
    <property type="evidence" value="ECO:0000315"/>
    <property type="project" value="ParkinsonsUK-UCL"/>
</dbReference>
<dbReference type="GO" id="GO:0000122">
    <property type="term" value="P:negative regulation of transcription by RNA polymerase II"/>
    <property type="evidence" value="ECO:0000314"/>
    <property type="project" value="BHF-UCL"/>
</dbReference>
<dbReference type="GO" id="GO:0032689">
    <property type="term" value="P:negative regulation of type II interferon production"/>
    <property type="evidence" value="ECO:0000315"/>
    <property type="project" value="ARUK-UCL"/>
</dbReference>
<dbReference type="GO" id="GO:0036499">
    <property type="term" value="P:PERK-mediated unfolded protein response"/>
    <property type="evidence" value="ECO:0000304"/>
    <property type="project" value="ParkinsonsUK-UCL"/>
</dbReference>
<dbReference type="GO" id="GO:0051091">
    <property type="term" value="P:positive regulation of DNA-binding transcription factor activity"/>
    <property type="evidence" value="ECO:0000315"/>
    <property type="project" value="CAFA"/>
</dbReference>
<dbReference type="GO" id="GO:0045893">
    <property type="term" value="P:positive regulation of DNA-templated transcription"/>
    <property type="evidence" value="ECO:0000314"/>
    <property type="project" value="UniProtKB"/>
</dbReference>
<dbReference type="GO" id="GO:1902237">
    <property type="term" value="P:positive regulation of endoplasmic reticulum stress-induced intrinsic apoptotic signaling pathway"/>
    <property type="evidence" value="ECO:0000315"/>
    <property type="project" value="ParkinsonsUK-UCL"/>
</dbReference>
<dbReference type="GO" id="GO:0032757">
    <property type="term" value="P:positive regulation of interleukin-8 production"/>
    <property type="evidence" value="ECO:0000315"/>
    <property type="project" value="UniProtKB"/>
</dbReference>
<dbReference type="GO" id="GO:2001244">
    <property type="term" value="P:positive regulation of intrinsic apoptotic signaling pathway"/>
    <property type="evidence" value="ECO:0000315"/>
    <property type="project" value="UniProtKB"/>
</dbReference>
<dbReference type="GO" id="GO:0043525">
    <property type="term" value="P:positive regulation of neuron apoptotic process"/>
    <property type="evidence" value="ECO:0000315"/>
    <property type="project" value="ParkinsonsUK-UCL"/>
</dbReference>
<dbReference type="GO" id="GO:0045944">
    <property type="term" value="P:positive regulation of transcription by RNA polymerase II"/>
    <property type="evidence" value="ECO:0000314"/>
    <property type="project" value="ParkinsonsUK-UCL"/>
</dbReference>
<dbReference type="GO" id="GO:0043161">
    <property type="term" value="P:proteasome-mediated ubiquitin-dependent protein catabolic process"/>
    <property type="evidence" value="ECO:0000314"/>
    <property type="project" value="UniProtKB"/>
</dbReference>
<dbReference type="GO" id="GO:0010506">
    <property type="term" value="P:regulation of autophagy"/>
    <property type="evidence" value="ECO:0000250"/>
    <property type="project" value="UniProtKB"/>
</dbReference>
<dbReference type="GO" id="GO:0051726">
    <property type="term" value="P:regulation of cell cycle"/>
    <property type="evidence" value="ECO:0007669"/>
    <property type="project" value="UniProtKB-KW"/>
</dbReference>
<dbReference type="GO" id="GO:0006355">
    <property type="term" value="P:regulation of DNA-templated transcription"/>
    <property type="evidence" value="ECO:0000315"/>
    <property type="project" value="UniProtKB"/>
</dbReference>
<dbReference type="GO" id="GO:0006357">
    <property type="term" value="P:regulation of transcription by RNA polymerase II"/>
    <property type="evidence" value="ECO:0000314"/>
    <property type="project" value="MGI"/>
</dbReference>
<dbReference type="GO" id="GO:0051209">
    <property type="term" value="P:release of sequestered calcium ion into cytosol"/>
    <property type="evidence" value="ECO:0007669"/>
    <property type="project" value="Ensembl"/>
</dbReference>
<dbReference type="GO" id="GO:0034976">
    <property type="term" value="P:response to endoplasmic reticulum stress"/>
    <property type="evidence" value="ECO:0000314"/>
    <property type="project" value="UniProtKB"/>
</dbReference>
<dbReference type="GO" id="GO:0036119">
    <property type="term" value="P:response to platelet-derived growth factor"/>
    <property type="evidence" value="ECO:0007669"/>
    <property type="project" value="Ensembl"/>
</dbReference>
<dbReference type="GO" id="GO:0042594">
    <property type="term" value="P:response to starvation"/>
    <property type="evidence" value="ECO:0007669"/>
    <property type="project" value="Ensembl"/>
</dbReference>
<dbReference type="GO" id="GO:0006986">
    <property type="term" value="P:response to unfolded protein"/>
    <property type="evidence" value="ECO:0000314"/>
    <property type="project" value="UniProtKB"/>
</dbReference>
<dbReference type="GO" id="GO:0009611">
    <property type="term" value="P:response to wounding"/>
    <property type="evidence" value="ECO:0007669"/>
    <property type="project" value="Ensembl"/>
</dbReference>
<dbReference type="GO" id="GO:0007605">
    <property type="term" value="P:sensory perception of sound"/>
    <property type="evidence" value="ECO:0007669"/>
    <property type="project" value="Ensembl"/>
</dbReference>
<dbReference type="GO" id="GO:1904738">
    <property type="term" value="P:vascular associated smooth muscle cell migration"/>
    <property type="evidence" value="ECO:0007669"/>
    <property type="project" value="Ensembl"/>
</dbReference>
<dbReference type="GO" id="GO:1990874">
    <property type="term" value="P:vascular associated smooth muscle cell proliferation"/>
    <property type="evidence" value="ECO:0007669"/>
    <property type="project" value="Ensembl"/>
</dbReference>
<dbReference type="GO" id="GO:0016055">
    <property type="term" value="P:Wnt signaling pathway"/>
    <property type="evidence" value="ECO:0007669"/>
    <property type="project" value="UniProtKB-KW"/>
</dbReference>
<dbReference type="DisProt" id="DP00624"/>
<dbReference type="FunFam" id="1.20.5.170:FF:000066">
    <property type="entry name" value="DNA damage-inducible transcript 3 protein"/>
    <property type="match status" value="1"/>
</dbReference>
<dbReference type="Gene3D" id="1.20.5.170">
    <property type="match status" value="1"/>
</dbReference>
<dbReference type="InterPro" id="IPR004827">
    <property type="entry name" value="bZIP"/>
</dbReference>
<dbReference type="InterPro" id="IPR016670">
    <property type="entry name" value="DNA_damage_induc_transcript_3"/>
</dbReference>
<dbReference type="PANTHER" id="PTHR16833">
    <property type="entry name" value="DNA DAMAGE-INDUCIBLE TRANSCRIPT 3 DDIT3"/>
    <property type="match status" value="1"/>
</dbReference>
<dbReference type="PANTHER" id="PTHR16833:SF0">
    <property type="entry name" value="DNA DAMAGE-INDUCIBLE TRANSCRIPT 3 PROTEIN"/>
    <property type="match status" value="1"/>
</dbReference>
<dbReference type="PIRSF" id="PIRSF016571">
    <property type="entry name" value="C/EBPzeta_CHOP_DDIT3"/>
    <property type="match status" value="1"/>
</dbReference>
<dbReference type="SMART" id="SM00338">
    <property type="entry name" value="BRLZ"/>
    <property type="match status" value="1"/>
</dbReference>
<dbReference type="PROSITE" id="PS50217">
    <property type="entry name" value="BZIP"/>
    <property type="match status" value="1"/>
</dbReference>
<sequence length="169" mass="19175">MAAESLPFSFGTLSSWELEAWYEDLQEVLSSDENGGTYVSPPGNEEEESKIFTTLDPASLAWLTEEEPEPAEVTSTSQSPHSPDSSQSSLAQEEEEEDQGRTRKRKQSGHSPARAGKQRMKEKEQENERKVAQLAEENERLKQEIERLTREVEATRRALIDRMVNLHQA</sequence>
<accession>P35638</accession>
<accession>F8VS99</accession>
<gene>
    <name type="primary">DDIT3</name>
    <name type="synonym">CHOP</name>
    <name type="synonym">CHOP10</name>
    <name type="synonym">GADD153</name>
</gene>
<evidence type="ECO:0000250" key="1"/>
<evidence type="ECO:0000250" key="2">
    <source>
        <dbReference type="UniProtKB" id="P35639"/>
    </source>
</evidence>
<evidence type="ECO:0000255" key="3">
    <source>
        <dbReference type="PROSITE-ProRule" id="PRU00978"/>
    </source>
</evidence>
<evidence type="ECO:0000256" key="4">
    <source>
        <dbReference type="SAM" id="MobiDB-lite"/>
    </source>
</evidence>
<evidence type="ECO:0000269" key="5">
    <source>
    </source>
</evidence>
<evidence type="ECO:0000269" key="6">
    <source>
    </source>
</evidence>
<evidence type="ECO:0000269" key="7">
    <source>
    </source>
</evidence>
<evidence type="ECO:0000269" key="8">
    <source>
    </source>
</evidence>
<evidence type="ECO:0000269" key="9">
    <source>
    </source>
</evidence>
<evidence type="ECO:0000269" key="10">
    <source>
    </source>
</evidence>
<evidence type="ECO:0000269" key="11">
    <source>
    </source>
</evidence>
<evidence type="ECO:0000269" key="12">
    <source>
    </source>
</evidence>
<evidence type="ECO:0000269" key="13">
    <source>
    </source>
</evidence>
<evidence type="ECO:0000269" key="14">
    <source>
    </source>
</evidence>
<evidence type="ECO:0000269" key="15">
    <source>
    </source>
</evidence>
<evidence type="ECO:0000269" key="16">
    <source>
    </source>
</evidence>
<evidence type="ECO:0000269" key="17">
    <source>
    </source>
</evidence>
<evidence type="ECO:0000269" key="18">
    <source>
    </source>
</evidence>
<evidence type="ECO:0000269" key="19">
    <source>
    </source>
</evidence>
<evidence type="ECO:0000303" key="20">
    <source ref="4"/>
</evidence>
<evidence type="ECO:0000305" key="21"/>
<proteinExistence type="evidence at protein level"/>
<feature type="chain" id="PRO_0000076642" description="DNA damage-inducible transcript 3 protein">
    <location>
        <begin position="1"/>
        <end position="169"/>
    </location>
</feature>
<feature type="domain" description="bZIP" evidence="3">
    <location>
        <begin position="99"/>
        <end position="162"/>
    </location>
</feature>
<feature type="region of interest" description="N-terminal">
    <location>
        <begin position="10"/>
        <end position="26"/>
    </location>
</feature>
<feature type="region of interest" description="Interaction with TRIB3">
    <location>
        <begin position="10"/>
        <end position="18"/>
    </location>
</feature>
<feature type="region of interest" description="Disordered" evidence="4">
    <location>
        <begin position="32"/>
        <end position="139"/>
    </location>
</feature>
<feature type="region of interest" description="Basic motif" evidence="3">
    <location>
        <begin position="101"/>
        <end position="130"/>
    </location>
</feature>
<feature type="region of interest" description="Leucine-zipper" evidence="3">
    <location>
        <begin position="134"/>
        <end position="148"/>
    </location>
</feature>
<feature type="compositionally biased region" description="Low complexity" evidence="4">
    <location>
        <begin position="74"/>
        <end position="89"/>
    </location>
</feature>
<feature type="compositionally biased region" description="Basic and acidic residues" evidence="4">
    <location>
        <begin position="119"/>
        <end position="139"/>
    </location>
</feature>
<feature type="modified residue" description="Phosphoserine; by CK2" evidence="2">
    <location>
        <position position="14"/>
    </location>
</feature>
<feature type="modified residue" description="Phosphoserine; by CK2" evidence="2">
    <location>
        <position position="15"/>
    </location>
</feature>
<feature type="modified residue" description="Phosphoserine; by CK2" evidence="2">
    <location>
        <position position="30"/>
    </location>
</feature>
<feature type="modified residue" description="Phosphoserine; by CK2" evidence="2">
    <location>
        <position position="31"/>
    </location>
</feature>
<feature type="modified residue" description="Phosphoserine; by MAPK14" evidence="2">
    <location>
        <position position="79"/>
    </location>
</feature>
<feature type="modified residue" description="Phosphoserine; by MAPK14" evidence="2">
    <location>
        <position position="82"/>
    </location>
</feature>
<feature type="splice variant" id="VSP_047277" description="In isoform 2." evidence="20">
    <original>M</original>
    <variation>MELVPATPHYPADVLFQTDPTAEM</variation>
    <location>
        <position position="1"/>
    </location>
</feature>
<feature type="sequence variant" id="VAR_036000" description="In a colorectal cancer sample; somatic mutation." evidence="8">
    <original>A</original>
    <variation>V</variation>
    <location>
        <position position="115"/>
    </location>
</feature>
<feature type="sequence conflict" description="In Ref. 1; AAB22646." evidence="21" ref="1">
    <original>FGTLS</original>
    <variation>SDTV</variation>
    <location>
        <begin position="10"/>
        <end position="14"/>
    </location>
</feature>